<accession>A1JJD6</accession>
<organism>
    <name type="scientific">Yersinia enterocolitica serotype O:8 / biotype 1B (strain NCTC 13174 / 8081)</name>
    <dbReference type="NCBI Taxonomy" id="393305"/>
    <lineage>
        <taxon>Bacteria</taxon>
        <taxon>Pseudomonadati</taxon>
        <taxon>Pseudomonadota</taxon>
        <taxon>Gammaproteobacteria</taxon>
        <taxon>Enterobacterales</taxon>
        <taxon>Yersiniaceae</taxon>
        <taxon>Yersinia</taxon>
    </lineage>
</organism>
<sequence length="376" mass="40975">MAKRDYYEVLGVKKDADEREIKKAYKRLAVKYHPDRNQDENDTGENFKEVKEAYEILTDPQKRAAYDQYGHAAFEQGGMGGGGFGGGGADFTDIFGDVFGDIFGGGRRQRASRGSDLRYNMDLTLEEAVRGVTKEIRIPTLNECDVCHGSGAKPGSSPVTCSTCRGAGQVHMRQGFFTVQQACPTCHGSGQIIKDPCNKCHGHGRVEKSKTLSVKIPAGVDTGDRIRLSGEGEAGEHGAPAGDLYVQVQVKAHPIFEREGNNLYCEVPINFAMAALGGEIEVPTLDGRVKLKVPAETQTGKLFRMRGKGVKSVRGGSQGDLLCRVVVETPVHLSEKQKQLLRELEESFVGAAGEKNSPRSKSFLDGVKKFFDDLTR</sequence>
<gene>
    <name evidence="1" type="primary">dnaJ</name>
    <name type="ordered locus">YE0610</name>
</gene>
<name>DNAJ_YERE8</name>
<feature type="chain" id="PRO_1000085332" description="Chaperone protein DnaJ">
    <location>
        <begin position="1"/>
        <end position="376"/>
    </location>
</feature>
<feature type="domain" description="J" evidence="1">
    <location>
        <begin position="5"/>
        <end position="70"/>
    </location>
</feature>
<feature type="repeat" description="CXXCXGXG motif">
    <location>
        <begin position="144"/>
        <end position="151"/>
    </location>
</feature>
<feature type="repeat" description="CXXCXGXG motif">
    <location>
        <begin position="161"/>
        <end position="168"/>
    </location>
</feature>
<feature type="repeat" description="CXXCXGXG motif">
    <location>
        <begin position="183"/>
        <end position="190"/>
    </location>
</feature>
<feature type="repeat" description="CXXCXGXG motif">
    <location>
        <begin position="197"/>
        <end position="204"/>
    </location>
</feature>
<feature type="zinc finger region" description="CR-type" evidence="1">
    <location>
        <begin position="131"/>
        <end position="209"/>
    </location>
</feature>
<feature type="binding site" evidence="1">
    <location>
        <position position="144"/>
    </location>
    <ligand>
        <name>Zn(2+)</name>
        <dbReference type="ChEBI" id="CHEBI:29105"/>
        <label>1</label>
    </ligand>
</feature>
<feature type="binding site" evidence="1">
    <location>
        <position position="147"/>
    </location>
    <ligand>
        <name>Zn(2+)</name>
        <dbReference type="ChEBI" id="CHEBI:29105"/>
        <label>1</label>
    </ligand>
</feature>
<feature type="binding site" evidence="1">
    <location>
        <position position="161"/>
    </location>
    <ligand>
        <name>Zn(2+)</name>
        <dbReference type="ChEBI" id="CHEBI:29105"/>
        <label>2</label>
    </ligand>
</feature>
<feature type="binding site" evidence="1">
    <location>
        <position position="164"/>
    </location>
    <ligand>
        <name>Zn(2+)</name>
        <dbReference type="ChEBI" id="CHEBI:29105"/>
        <label>2</label>
    </ligand>
</feature>
<feature type="binding site" evidence="1">
    <location>
        <position position="183"/>
    </location>
    <ligand>
        <name>Zn(2+)</name>
        <dbReference type="ChEBI" id="CHEBI:29105"/>
        <label>2</label>
    </ligand>
</feature>
<feature type="binding site" evidence="1">
    <location>
        <position position="186"/>
    </location>
    <ligand>
        <name>Zn(2+)</name>
        <dbReference type="ChEBI" id="CHEBI:29105"/>
        <label>2</label>
    </ligand>
</feature>
<feature type="binding site" evidence="1">
    <location>
        <position position="197"/>
    </location>
    <ligand>
        <name>Zn(2+)</name>
        <dbReference type="ChEBI" id="CHEBI:29105"/>
        <label>1</label>
    </ligand>
</feature>
<feature type="binding site" evidence="1">
    <location>
        <position position="200"/>
    </location>
    <ligand>
        <name>Zn(2+)</name>
        <dbReference type="ChEBI" id="CHEBI:29105"/>
        <label>1</label>
    </ligand>
</feature>
<reference key="1">
    <citation type="journal article" date="2006" name="PLoS Genet.">
        <title>The complete genome sequence and comparative genome analysis of the high pathogenicity Yersinia enterocolitica strain 8081.</title>
        <authorList>
            <person name="Thomson N.R."/>
            <person name="Howard S."/>
            <person name="Wren B.W."/>
            <person name="Holden M.T.G."/>
            <person name="Crossman L."/>
            <person name="Challis G.L."/>
            <person name="Churcher C."/>
            <person name="Mungall K."/>
            <person name="Brooks K."/>
            <person name="Chillingworth T."/>
            <person name="Feltwell T."/>
            <person name="Abdellah Z."/>
            <person name="Hauser H."/>
            <person name="Jagels K."/>
            <person name="Maddison M."/>
            <person name="Moule S."/>
            <person name="Sanders M."/>
            <person name="Whitehead S."/>
            <person name="Quail M.A."/>
            <person name="Dougan G."/>
            <person name="Parkhill J."/>
            <person name="Prentice M.B."/>
        </authorList>
    </citation>
    <scope>NUCLEOTIDE SEQUENCE [LARGE SCALE GENOMIC DNA]</scope>
    <source>
        <strain>NCTC 13174 / 8081</strain>
    </source>
</reference>
<evidence type="ECO:0000255" key="1">
    <source>
        <dbReference type="HAMAP-Rule" id="MF_01152"/>
    </source>
</evidence>
<keyword id="KW-0143">Chaperone</keyword>
<keyword id="KW-0963">Cytoplasm</keyword>
<keyword id="KW-0235">DNA replication</keyword>
<keyword id="KW-0479">Metal-binding</keyword>
<keyword id="KW-0677">Repeat</keyword>
<keyword id="KW-0346">Stress response</keyword>
<keyword id="KW-0862">Zinc</keyword>
<keyword id="KW-0863">Zinc-finger</keyword>
<proteinExistence type="inferred from homology"/>
<protein>
    <recommendedName>
        <fullName evidence="1">Chaperone protein DnaJ</fullName>
    </recommendedName>
</protein>
<comment type="function">
    <text evidence="1">Participates actively in the response to hyperosmotic and heat shock by preventing the aggregation of stress-denatured proteins and by disaggregating proteins, also in an autonomous, DnaK-independent fashion. Unfolded proteins bind initially to DnaJ; upon interaction with the DnaJ-bound protein, DnaK hydrolyzes its bound ATP, resulting in the formation of a stable complex. GrpE releases ADP from DnaK; ATP binding to DnaK triggers the release of the substrate protein, thus completing the reaction cycle. Several rounds of ATP-dependent interactions between DnaJ, DnaK and GrpE are required for fully efficient folding. Also involved, together with DnaK and GrpE, in the DNA replication of plasmids through activation of initiation proteins.</text>
</comment>
<comment type="cofactor">
    <cofactor evidence="1">
        <name>Zn(2+)</name>
        <dbReference type="ChEBI" id="CHEBI:29105"/>
    </cofactor>
    <text evidence="1">Binds 2 Zn(2+) ions per monomer.</text>
</comment>
<comment type="subunit">
    <text evidence="1">Homodimer.</text>
</comment>
<comment type="subcellular location">
    <subcellularLocation>
        <location evidence="1">Cytoplasm</location>
    </subcellularLocation>
</comment>
<comment type="domain">
    <text evidence="1">The J domain is necessary and sufficient to stimulate DnaK ATPase activity. Zinc center 1 plays an important role in the autonomous, DnaK-independent chaperone activity of DnaJ. Zinc center 2 is essential for interaction with DnaK and for DnaJ activity.</text>
</comment>
<comment type="similarity">
    <text evidence="1">Belongs to the DnaJ family.</text>
</comment>
<dbReference type="EMBL" id="AM286415">
    <property type="protein sequence ID" value="CAL10724.1"/>
    <property type="molecule type" value="Genomic_DNA"/>
</dbReference>
<dbReference type="RefSeq" id="WP_005157034.1">
    <property type="nucleotide sequence ID" value="NC_008800.1"/>
</dbReference>
<dbReference type="RefSeq" id="YP_001004964.1">
    <property type="nucleotide sequence ID" value="NC_008800.1"/>
</dbReference>
<dbReference type="SMR" id="A1JJD6"/>
<dbReference type="GeneID" id="93972600"/>
<dbReference type="KEGG" id="yen:YE0610"/>
<dbReference type="PATRIC" id="fig|393305.7.peg.705"/>
<dbReference type="eggNOG" id="COG0484">
    <property type="taxonomic scope" value="Bacteria"/>
</dbReference>
<dbReference type="HOGENOM" id="CLU_017633_0_7_6"/>
<dbReference type="OrthoDB" id="9779889at2"/>
<dbReference type="Proteomes" id="UP000000642">
    <property type="component" value="Chromosome"/>
</dbReference>
<dbReference type="GO" id="GO:0005737">
    <property type="term" value="C:cytoplasm"/>
    <property type="evidence" value="ECO:0007669"/>
    <property type="project" value="UniProtKB-SubCell"/>
</dbReference>
<dbReference type="GO" id="GO:0005524">
    <property type="term" value="F:ATP binding"/>
    <property type="evidence" value="ECO:0007669"/>
    <property type="project" value="InterPro"/>
</dbReference>
<dbReference type="GO" id="GO:0031072">
    <property type="term" value="F:heat shock protein binding"/>
    <property type="evidence" value="ECO:0007669"/>
    <property type="project" value="InterPro"/>
</dbReference>
<dbReference type="GO" id="GO:0051082">
    <property type="term" value="F:unfolded protein binding"/>
    <property type="evidence" value="ECO:0007669"/>
    <property type="project" value="UniProtKB-UniRule"/>
</dbReference>
<dbReference type="GO" id="GO:0008270">
    <property type="term" value="F:zinc ion binding"/>
    <property type="evidence" value="ECO:0007669"/>
    <property type="project" value="UniProtKB-UniRule"/>
</dbReference>
<dbReference type="GO" id="GO:0051085">
    <property type="term" value="P:chaperone cofactor-dependent protein refolding"/>
    <property type="evidence" value="ECO:0007669"/>
    <property type="project" value="TreeGrafter"/>
</dbReference>
<dbReference type="GO" id="GO:0006260">
    <property type="term" value="P:DNA replication"/>
    <property type="evidence" value="ECO:0007669"/>
    <property type="project" value="UniProtKB-KW"/>
</dbReference>
<dbReference type="GO" id="GO:0042026">
    <property type="term" value="P:protein refolding"/>
    <property type="evidence" value="ECO:0007669"/>
    <property type="project" value="TreeGrafter"/>
</dbReference>
<dbReference type="GO" id="GO:0009408">
    <property type="term" value="P:response to heat"/>
    <property type="evidence" value="ECO:0007669"/>
    <property type="project" value="InterPro"/>
</dbReference>
<dbReference type="CDD" id="cd06257">
    <property type="entry name" value="DnaJ"/>
    <property type="match status" value="1"/>
</dbReference>
<dbReference type="CDD" id="cd10747">
    <property type="entry name" value="DnaJ_C"/>
    <property type="match status" value="1"/>
</dbReference>
<dbReference type="CDD" id="cd10719">
    <property type="entry name" value="DnaJ_zf"/>
    <property type="match status" value="1"/>
</dbReference>
<dbReference type="FunFam" id="1.10.287.110:FF:000003">
    <property type="entry name" value="Molecular chaperone DnaJ"/>
    <property type="match status" value="1"/>
</dbReference>
<dbReference type="FunFam" id="2.10.230.10:FF:000002">
    <property type="entry name" value="Molecular chaperone DnaJ"/>
    <property type="match status" value="1"/>
</dbReference>
<dbReference type="FunFam" id="2.60.260.20:FF:000004">
    <property type="entry name" value="Molecular chaperone DnaJ"/>
    <property type="match status" value="1"/>
</dbReference>
<dbReference type="Gene3D" id="1.10.287.110">
    <property type="entry name" value="DnaJ domain"/>
    <property type="match status" value="1"/>
</dbReference>
<dbReference type="Gene3D" id="2.10.230.10">
    <property type="entry name" value="Heat shock protein DnaJ, cysteine-rich domain"/>
    <property type="match status" value="1"/>
</dbReference>
<dbReference type="Gene3D" id="2.60.260.20">
    <property type="entry name" value="Urease metallochaperone UreE, N-terminal domain"/>
    <property type="match status" value="2"/>
</dbReference>
<dbReference type="HAMAP" id="MF_01152">
    <property type="entry name" value="DnaJ"/>
    <property type="match status" value="1"/>
</dbReference>
<dbReference type="InterPro" id="IPR012724">
    <property type="entry name" value="DnaJ"/>
</dbReference>
<dbReference type="InterPro" id="IPR002939">
    <property type="entry name" value="DnaJ_C"/>
</dbReference>
<dbReference type="InterPro" id="IPR001623">
    <property type="entry name" value="DnaJ_domain"/>
</dbReference>
<dbReference type="InterPro" id="IPR018253">
    <property type="entry name" value="DnaJ_domain_CS"/>
</dbReference>
<dbReference type="InterPro" id="IPR008971">
    <property type="entry name" value="HSP40/DnaJ_pept-bd"/>
</dbReference>
<dbReference type="InterPro" id="IPR001305">
    <property type="entry name" value="HSP_DnaJ_Cys-rich_dom"/>
</dbReference>
<dbReference type="InterPro" id="IPR036410">
    <property type="entry name" value="HSP_DnaJ_Cys-rich_dom_sf"/>
</dbReference>
<dbReference type="InterPro" id="IPR036869">
    <property type="entry name" value="J_dom_sf"/>
</dbReference>
<dbReference type="NCBIfam" id="TIGR02349">
    <property type="entry name" value="DnaJ_bact"/>
    <property type="match status" value="1"/>
</dbReference>
<dbReference type="NCBIfam" id="NF008035">
    <property type="entry name" value="PRK10767.1"/>
    <property type="match status" value="1"/>
</dbReference>
<dbReference type="PANTHER" id="PTHR43096:SF48">
    <property type="entry name" value="CHAPERONE PROTEIN DNAJ"/>
    <property type="match status" value="1"/>
</dbReference>
<dbReference type="PANTHER" id="PTHR43096">
    <property type="entry name" value="DNAJ HOMOLOG 1, MITOCHONDRIAL-RELATED"/>
    <property type="match status" value="1"/>
</dbReference>
<dbReference type="Pfam" id="PF00226">
    <property type="entry name" value="DnaJ"/>
    <property type="match status" value="1"/>
</dbReference>
<dbReference type="Pfam" id="PF01556">
    <property type="entry name" value="DnaJ_C"/>
    <property type="match status" value="1"/>
</dbReference>
<dbReference type="Pfam" id="PF00684">
    <property type="entry name" value="DnaJ_CXXCXGXG"/>
    <property type="match status" value="1"/>
</dbReference>
<dbReference type="PRINTS" id="PR00625">
    <property type="entry name" value="JDOMAIN"/>
</dbReference>
<dbReference type="SMART" id="SM00271">
    <property type="entry name" value="DnaJ"/>
    <property type="match status" value="1"/>
</dbReference>
<dbReference type="SUPFAM" id="SSF46565">
    <property type="entry name" value="Chaperone J-domain"/>
    <property type="match status" value="1"/>
</dbReference>
<dbReference type="SUPFAM" id="SSF57938">
    <property type="entry name" value="DnaJ/Hsp40 cysteine-rich domain"/>
    <property type="match status" value="1"/>
</dbReference>
<dbReference type="SUPFAM" id="SSF49493">
    <property type="entry name" value="HSP40/DnaJ peptide-binding domain"/>
    <property type="match status" value="2"/>
</dbReference>
<dbReference type="PROSITE" id="PS00636">
    <property type="entry name" value="DNAJ_1"/>
    <property type="match status" value="1"/>
</dbReference>
<dbReference type="PROSITE" id="PS50076">
    <property type="entry name" value="DNAJ_2"/>
    <property type="match status" value="1"/>
</dbReference>
<dbReference type="PROSITE" id="PS51188">
    <property type="entry name" value="ZF_CR"/>
    <property type="match status" value="1"/>
</dbReference>